<comment type="function">
    <text evidence="1">Removes the formyl group from the N-terminal Met of newly synthesized proteins. Requires at least a dipeptide for an efficient rate of reaction. N-terminal L-methionine is a prerequisite for activity but the enzyme has broad specificity at other positions.</text>
</comment>
<comment type="catalytic activity">
    <reaction evidence="1">
        <text>N-terminal N-formyl-L-methionyl-[peptide] + H2O = N-terminal L-methionyl-[peptide] + formate</text>
        <dbReference type="Rhea" id="RHEA:24420"/>
        <dbReference type="Rhea" id="RHEA-COMP:10639"/>
        <dbReference type="Rhea" id="RHEA-COMP:10640"/>
        <dbReference type="ChEBI" id="CHEBI:15377"/>
        <dbReference type="ChEBI" id="CHEBI:15740"/>
        <dbReference type="ChEBI" id="CHEBI:49298"/>
        <dbReference type="ChEBI" id="CHEBI:64731"/>
        <dbReference type="EC" id="3.5.1.88"/>
    </reaction>
</comment>
<comment type="cofactor">
    <cofactor evidence="1">
        <name>Fe(2+)</name>
        <dbReference type="ChEBI" id="CHEBI:29033"/>
    </cofactor>
    <text evidence="1">Binds 1 Fe(2+) ion.</text>
</comment>
<comment type="similarity">
    <text evidence="1">Belongs to the polypeptide deformylase family.</text>
</comment>
<proteinExistence type="inferred from homology"/>
<sequence length="169" mass="19328">MSVLQVLHIPDERLRKVAKPVEEVNAEIQRIVDDMFETMYAEEGIGLAATQVDIHQRIIVIDVSENRDERLVLINPELLEKSGETGIEEGCLSIPEQRALVPRAEKVKIRALDRDGKPFELEADGLLAICIQHEMDHLVGKLFMDYLSPLKQQRIRQKVEKLDRLKARA</sequence>
<accession>B7UK10</accession>
<organism>
    <name type="scientific">Escherichia coli O127:H6 (strain E2348/69 / EPEC)</name>
    <dbReference type="NCBI Taxonomy" id="574521"/>
    <lineage>
        <taxon>Bacteria</taxon>
        <taxon>Pseudomonadati</taxon>
        <taxon>Pseudomonadota</taxon>
        <taxon>Gammaproteobacteria</taxon>
        <taxon>Enterobacterales</taxon>
        <taxon>Enterobacteriaceae</taxon>
        <taxon>Escherichia</taxon>
    </lineage>
</organism>
<protein>
    <recommendedName>
        <fullName evidence="1">Peptide deformylase</fullName>
        <shortName evidence="1">PDF</shortName>
        <ecNumber evidence="1">3.5.1.88</ecNumber>
    </recommendedName>
    <alternativeName>
        <fullName evidence="1">Polypeptide deformylase</fullName>
    </alternativeName>
</protein>
<keyword id="KW-0378">Hydrolase</keyword>
<keyword id="KW-0408">Iron</keyword>
<keyword id="KW-0479">Metal-binding</keyword>
<keyword id="KW-0648">Protein biosynthesis</keyword>
<keyword id="KW-1185">Reference proteome</keyword>
<reference key="1">
    <citation type="journal article" date="2009" name="J. Bacteriol.">
        <title>Complete genome sequence and comparative genome analysis of enteropathogenic Escherichia coli O127:H6 strain E2348/69.</title>
        <authorList>
            <person name="Iguchi A."/>
            <person name="Thomson N.R."/>
            <person name="Ogura Y."/>
            <person name="Saunders D."/>
            <person name="Ooka T."/>
            <person name="Henderson I.R."/>
            <person name="Harris D."/>
            <person name="Asadulghani M."/>
            <person name="Kurokawa K."/>
            <person name="Dean P."/>
            <person name="Kenny B."/>
            <person name="Quail M.A."/>
            <person name="Thurston S."/>
            <person name="Dougan G."/>
            <person name="Hayashi T."/>
            <person name="Parkhill J."/>
            <person name="Frankel G."/>
        </authorList>
    </citation>
    <scope>NUCLEOTIDE SEQUENCE [LARGE SCALE GENOMIC DNA]</scope>
    <source>
        <strain>E2348/69 / EPEC</strain>
    </source>
</reference>
<name>DEF_ECO27</name>
<evidence type="ECO:0000255" key="1">
    <source>
        <dbReference type="HAMAP-Rule" id="MF_00163"/>
    </source>
</evidence>
<dbReference type="EC" id="3.5.1.88" evidence="1"/>
<dbReference type="EMBL" id="FM180568">
    <property type="protein sequence ID" value="CAS11097.1"/>
    <property type="molecule type" value="Genomic_DNA"/>
</dbReference>
<dbReference type="RefSeq" id="WP_000114984.1">
    <property type="nucleotide sequence ID" value="NC_011601.1"/>
</dbReference>
<dbReference type="SMR" id="B7UK10"/>
<dbReference type="GeneID" id="89518132"/>
<dbReference type="KEGG" id="ecg:E2348C_3549"/>
<dbReference type="HOGENOM" id="CLU_061901_2_1_6"/>
<dbReference type="Proteomes" id="UP000008205">
    <property type="component" value="Chromosome"/>
</dbReference>
<dbReference type="GO" id="GO:0046872">
    <property type="term" value="F:metal ion binding"/>
    <property type="evidence" value="ECO:0007669"/>
    <property type="project" value="UniProtKB-KW"/>
</dbReference>
<dbReference type="GO" id="GO:0042586">
    <property type="term" value="F:peptide deformylase activity"/>
    <property type="evidence" value="ECO:0007669"/>
    <property type="project" value="UniProtKB-UniRule"/>
</dbReference>
<dbReference type="GO" id="GO:0043686">
    <property type="term" value="P:co-translational protein modification"/>
    <property type="evidence" value="ECO:0007669"/>
    <property type="project" value="TreeGrafter"/>
</dbReference>
<dbReference type="GO" id="GO:0006412">
    <property type="term" value="P:translation"/>
    <property type="evidence" value="ECO:0007669"/>
    <property type="project" value="UniProtKB-UniRule"/>
</dbReference>
<dbReference type="CDD" id="cd00487">
    <property type="entry name" value="Pep_deformylase"/>
    <property type="match status" value="1"/>
</dbReference>
<dbReference type="FunFam" id="3.90.45.10:FF:000001">
    <property type="entry name" value="Peptide deformylase"/>
    <property type="match status" value="1"/>
</dbReference>
<dbReference type="Gene3D" id="3.90.45.10">
    <property type="entry name" value="Peptide deformylase"/>
    <property type="match status" value="1"/>
</dbReference>
<dbReference type="HAMAP" id="MF_00163">
    <property type="entry name" value="Pep_deformylase"/>
    <property type="match status" value="1"/>
</dbReference>
<dbReference type="InterPro" id="IPR023635">
    <property type="entry name" value="Peptide_deformylase"/>
</dbReference>
<dbReference type="InterPro" id="IPR036821">
    <property type="entry name" value="Peptide_deformylase_sf"/>
</dbReference>
<dbReference type="NCBIfam" id="TIGR00079">
    <property type="entry name" value="pept_deformyl"/>
    <property type="match status" value="1"/>
</dbReference>
<dbReference type="NCBIfam" id="NF001159">
    <property type="entry name" value="PRK00150.1-3"/>
    <property type="match status" value="1"/>
</dbReference>
<dbReference type="PANTHER" id="PTHR10458">
    <property type="entry name" value="PEPTIDE DEFORMYLASE"/>
    <property type="match status" value="1"/>
</dbReference>
<dbReference type="PANTHER" id="PTHR10458:SF21">
    <property type="entry name" value="PEPTIDE DEFORMYLASE"/>
    <property type="match status" value="1"/>
</dbReference>
<dbReference type="Pfam" id="PF01327">
    <property type="entry name" value="Pep_deformylase"/>
    <property type="match status" value="1"/>
</dbReference>
<dbReference type="PIRSF" id="PIRSF004749">
    <property type="entry name" value="Pep_def"/>
    <property type="match status" value="1"/>
</dbReference>
<dbReference type="PRINTS" id="PR01576">
    <property type="entry name" value="PDEFORMYLASE"/>
</dbReference>
<dbReference type="SUPFAM" id="SSF56420">
    <property type="entry name" value="Peptide deformylase"/>
    <property type="match status" value="1"/>
</dbReference>
<feature type="chain" id="PRO_1000200728" description="Peptide deformylase">
    <location>
        <begin position="1"/>
        <end position="169"/>
    </location>
</feature>
<feature type="active site" evidence="1">
    <location>
        <position position="134"/>
    </location>
</feature>
<feature type="binding site" evidence="1">
    <location>
        <position position="91"/>
    </location>
    <ligand>
        <name>Fe cation</name>
        <dbReference type="ChEBI" id="CHEBI:24875"/>
    </ligand>
</feature>
<feature type="binding site" evidence="1">
    <location>
        <position position="133"/>
    </location>
    <ligand>
        <name>Fe cation</name>
        <dbReference type="ChEBI" id="CHEBI:24875"/>
    </ligand>
</feature>
<feature type="binding site" evidence="1">
    <location>
        <position position="137"/>
    </location>
    <ligand>
        <name>Fe cation</name>
        <dbReference type="ChEBI" id="CHEBI:24875"/>
    </ligand>
</feature>
<gene>
    <name evidence="1" type="primary">def</name>
    <name type="ordered locus">E2348C_3549</name>
</gene>